<reference key="1">
    <citation type="journal article" date="2007" name="J. Bacteriol.">
        <title>Genome sequence and analysis of the soil cellulolytic actinomycete Thermobifida fusca YX.</title>
        <authorList>
            <person name="Lykidis A."/>
            <person name="Mavromatis K."/>
            <person name="Ivanova N."/>
            <person name="Anderson I."/>
            <person name="Land M."/>
            <person name="DiBartolo G."/>
            <person name="Martinez M."/>
            <person name="Lapidus A."/>
            <person name="Lucas S."/>
            <person name="Copeland A."/>
            <person name="Richardson P."/>
            <person name="Wilson D.B."/>
            <person name="Kyrpides N."/>
        </authorList>
    </citation>
    <scope>NUCLEOTIDE SEQUENCE [LARGE SCALE GENOMIC DNA]</scope>
    <source>
        <strain>YX</strain>
    </source>
</reference>
<organism>
    <name type="scientific">Thermobifida fusca (strain YX)</name>
    <dbReference type="NCBI Taxonomy" id="269800"/>
    <lineage>
        <taxon>Bacteria</taxon>
        <taxon>Bacillati</taxon>
        <taxon>Actinomycetota</taxon>
        <taxon>Actinomycetes</taxon>
        <taxon>Streptosporangiales</taxon>
        <taxon>Nocardiopsidaceae</taxon>
        <taxon>Thermobifida</taxon>
    </lineage>
</organism>
<accession>Q47LI2</accession>
<proteinExistence type="inferred from homology"/>
<comment type="function">
    <text evidence="1">Binds directly to 23S rRNA. The L1 stalk is quite mobile in the ribosome, and is involved in E site tRNA release.</text>
</comment>
<comment type="function">
    <text evidence="1">Protein L1 is also a translational repressor protein, it controls the translation of the L11 operon by binding to its mRNA.</text>
</comment>
<comment type="subunit">
    <text evidence="1">Part of the 50S ribosomal subunit.</text>
</comment>
<comment type="similarity">
    <text evidence="1">Belongs to the universal ribosomal protein uL1 family.</text>
</comment>
<name>RL1_THEFY</name>
<feature type="chain" id="PRO_0000230646" description="Large ribosomal subunit protein uL1">
    <location>
        <begin position="1"/>
        <end position="235"/>
    </location>
</feature>
<protein>
    <recommendedName>
        <fullName evidence="1">Large ribosomal subunit protein uL1</fullName>
    </recommendedName>
    <alternativeName>
        <fullName evidence="2">50S ribosomal protein L1</fullName>
    </alternativeName>
</protein>
<dbReference type="EMBL" id="CP000088">
    <property type="protein sequence ID" value="AAZ56690.1"/>
    <property type="molecule type" value="Genomic_DNA"/>
</dbReference>
<dbReference type="RefSeq" id="WP_011293080.1">
    <property type="nucleotide sequence ID" value="NC_007333.1"/>
</dbReference>
<dbReference type="SMR" id="Q47LI2"/>
<dbReference type="STRING" id="269800.Tfu_2657"/>
<dbReference type="KEGG" id="tfu:Tfu_2657"/>
<dbReference type="eggNOG" id="COG0081">
    <property type="taxonomic scope" value="Bacteria"/>
</dbReference>
<dbReference type="HOGENOM" id="CLU_062853_0_0_11"/>
<dbReference type="OrthoDB" id="9803740at2"/>
<dbReference type="GO" id="GO:0015934">
    <property type="term" value="C:large ribosomal subunit"/>
    <property type="evidence" value="ECO:0007669"/>
    <property type="project" value="InterPro"/>
</dbReference>
<dbReference type="GO" id="GO:0019843">
    <property type="term" value="F:rRNA binding"/>
    <property type="evidence" value="ECO:0007669"/>
    <property type="project" value="UniProtKB-UniRule"/>
</dbReference>
<dbReference type="GO" id="GO:0003735">
    <property type="term" value="F:structural constituent of ribosome"/>
    <property type="evidence" value="ECO:0007669"/>
    <property type="project" value="InterPro"/>
</dbReference>
<dbReference type="GO" id="GO:0000049">
    <property type="term" value="F:tRNA binding"/>
    <property type="evidence" value="ECO:0007669"/>
    <property type="project" value="UniProtKB-KW"/>
</dbReference>
<dbReference type="GO" id="GO:0006417">
    <property type="term" value="P:regulation of translation"/>
    <property type="evidence" value="ECO:0007669"/>
    <property type="project" value="UniProtKB-KW"/>
</dbReference>
<dbReference type="GO" id="GO:0006412">
    <property type="term" value="P:translation"/>
    <property type="evidence" value="ECO:0007669"/>
    <property type="project" value="UniProtKB-UniRule"/>
</dbReference>
<dbReference type="CDD" id="cd00403">
    <property type="entry name" value="Ribosomal_L1"/>
    <property type="match status" value="1"/>
</dbReference>
<dbReference type="FunFam" id="3.40.50.790:FF:000001">
    <property type="entry name" value="50S ribosomal protein L1"/>
    <property type="match status" value="1"/>
</dbReference>
<dbReference type="Gene3D" id="3.30.190.20">
    <property type="match status" value="1"/>
</dbReference>
<dbReference type="Gene3D" id="3.40.50.790">
    <property type="match status" value="1"/>
</dbReference>
<dbReference type="HAMAP" id="MF_01318_B">
    <property type="entry name" value="Ribosomal_uL1_B"/>
    <property type="match status" value="1"/>
</dbReference>
<dbReference type="InterPro" id="IPR005878">
    <property type="entry name" value="Ribosom_uL1_bac-type"/>
</dbReference>
<dbReference type="InterPro" id="IPR002143">
    <property type="entry name" value="Ribosomal_uL1"/>
</dbReference>
<dbReference type="InterPro" id="IPR023674">
    <property type="entry name" value="Ribosomal_uL1-like"/>
</dbReference>
<dbReference type="InterPro" id="IPR028364">
    <property type="entry name" value="Ribosomal_uL1/biogenesis"/>
</dbReference>
<dbReference type="InterPro" id="IPR016095">
    <property type="entry name" value="Ribosomal_uL1_3-a/b-sand"/>
</dbReference>
<dbReference type="InterPro" id="IPR023673">
    <property type="entry name" value="Ribosomal_uL1_CS"/>
</dbReference>
<dbReference type="NCBIfam" id="TIGR01169">
    <property type="entry name" value="rplA_bact"/>
    <property type="match status" value="1"/>
</dbReference>
<dbReference type="PANTHER" id="PTHR36427">
    <property type="entry name" value="54S RIBOSOMAL PROTEIN L1, MITOCHONDRIAL"/>
    <property type="match status" value="1"/>
</dbReference>
<dbReference type="PANTHER" id="PTHR36427:SF3">
    <property type="entry name" value="LARGE RIBOSOMAL SUBUNIT PROTEIN UL1M"/>
    <property type="match status" value="1"/>
</dbReference>
<dbReference type="Pfam" id="PF00687">
    <property type="entry name" value="Ribosomal_L1"/>
    <property type="match status" value="1"/>
</dbReference>
<dbReference type="PIRSF" id="PIRSF002155">
    <property type="entry name" value="Ribosomal_L1"/>
    <property type="match status" value="1"/>
</dbReference>
<dbReference type="SUPFAM" id="SSF56808">
    <property type="entry name" value="Ribosomal protein L1"/>
    <property type="match status" value="1"/>
</dbReference>
<dbReference type="PROSITE" id="PS01199">
    <property type="entry name" value="RIBOSOMAL_L1"/>
    <property type="match status" value="1"/>
</dbReference>
<gene>
    <name evidence="1" type="primary">rplA</name>
    <name type="ordered locus">Tfu_2657</name>
</gene>
<evidence type="ECO:0000255" key="1">
    <source>
        <dbReference type="HAMAP-Rule" id="MF_01318"/>
    </source>
</evidence>
<evidence type="ECO:0000305" key="2"/>
<sequence length="235" mass="25514">MKRSKSYRKAAEQIDRTRLYTPAEAVRLAKETSTVKFDATVEVAMRLGVDPRKADQMVRGTVNLPHGTGKTARVLVFAAGERAEQARAAGADYVGDDDLVERIQQGFLDFDAVVATPDMMGKIGRLGRILGPRGLMPNPKTGTVTMDVAKAVSDIKGGKIEFRVDRHGNLHLIIGKVSFDEQKLLENYLAAVDEVLRLKPSAAKGRYIKKITLTTTMGPGIPVDPNATREAAKAA</sequence>
<keyword id="KW-0678">Repressor</keyword>
<keyword id="KW-0687">Ribonucleoprotein</keyword>
<keyword id="KW-0689">Ribosomal protein</keyword>
<keyword id="KW-0694">RNA-binding</keyword>
<keyword id="KW-0699">rRNA-binding</keyword>
<keyword id="KW-0810">Translation regulation</keyword>
<keyword id="KW-0820">tRNA-binding</keyword>